<evidence type="ECO:0000255" key="1">
    <source>
        <dbReference type="HAMAP-Rule" id="MF_01576"/>
    </source>
</evidence>
<organism>
    <name type="scientific">Escherichia coli O17:K52:H18 (strain UMN026 / ExPEC)</name>
    <dbReference type="NCBI Taxonomy" id="585056"/>
    <lineage>
        <taxon>Bacteria</taxon>
        <taxon>Pseudomonadati</taxon>
        <taxon>Pseudomonadota</taxon>
        <taxon>Gammaproteobacteria</taxon>
        <taxon>Enterobacterales</taxon>
        <taxon>Enterobacteriaceae</taxon>
        <taxon>Escherichia</taxon>
    </lineage>
</organism>
<sequence>MAAKIIDGKTIAQQVRSEVAQKVQARIAAGLRAPGLAVVLVGSNPASQIYVASKRKACEEVGFVSRSYDLPETTSEAELLELIDTLNADNTIDGILVQLPLPAGIDNVKVLERIHPDKDVDGFHPYNVGRLCQRAPRLRPCTPRGIVTLLERYNIDTFGLNAVVIGASNIVGRPMSMELLLAGCTTTVTHRFTKNLRHHVENADLLIVAVGKPGFIPGDWIKEGAIVIDVGINRLENGKVVGDVVFEDAAKRASYITPVPGGVGPMTVATLIENTLQACVEYHDPQGE</sequence>
<reference key="1">
    <citation type="journal article" date="2009" name="PLoS Genet.">
        <title>Organised genome dynamics in the Escherichia coli species results in highly diverse adaptive paths.</title>
        <authorList>
            <person name="Touchon M."/>
            <person name="Hoede C."/>
            <person name="Tenaillon O."/>
            <person name="Barbe V."/>
            <person name="Baeriswyl S."/>
            <person name="Bidet P."/>
            <person name="Bingen E."/>
            <person name="Bonacorsi S."/>
            <person name="Bouchier C."/>
            <person name="Bouvet O."/>
            <person name="Calteau A."/>
            <person name="Chiapello H."/>
            <person name="Clermont O."/>
            <person name="Cruveiller S."/>
            <person name="Danchin A."/>
            <person name="Diard M."/>
            <person name="Dossat C."/>
            <person name="Karoui M.E."/>
            <person name="Frapy E."/>
            <person name="Garry L."/>
            <person name="Ghigo J.M."/>
            <person name="Gilles A.M."/>
            <person name="Johnson J."/>
            <person name="Le Bouguenec C."/>
            <person name="Lescat M."/>
            <person name="Mangenot S."/>
            <person name="Martinez-Jehanne V."/>
            <person name="Matic I."/>
            <person name="Nassif X."/>
            <person name="Oztas S."/>
            <person name="Petit M.A."/>
            <person name="Pichon C."/>
            <person name="Rouy Z."/>
            <person name="Ruf C.S."/>
            <person name="Schneider D."/>
            <person name="Tourret J."/>
            <person name="Vacherie B."/>
            <person name="Vallenet D."/>
            <person name="Medigue C."/>
            <person name="Rocha E.P.C."/>
            <person name="Denamur E."/>
        </authorList>
    </citation>
    <scope>NUCLEOTIDE SEQUENCE [LARGE SCALE GENOMIC DNA]</scope>
    <source>
        <strain>UMN026 / ExPEC</strain>
    </source>
</reference>
<name>FOLD_ECOLU</name>
<dbReference type="EC" id="1.5.1.5" evidence="1"/>
<dbReference type="EC" id="3.5.4.9" evidence="1"/>
<dbReference type="EMBL" id="CU928163">
    <property type="protein sequence ID" value="CAR11784.1"/>
    <property type="molecule type" value="Genomic_DNA"/>
</dbReference>
<dbReference type="RefSeq" id="WP_000729161.1">
    <property type="nucleotide sequence ID" value="NC_011751.1"/>
</dbReference>
<dbReference type="RefSeq" id="YP_002411332.1">
    <property type="nucleotide sequence ID" value="NC_011751.1"/>
</dbReference>
<dbReference type="SMR" id="B7N983"/>
<dbReference type="STRING" id="585056.ECUMN_0569"/>
<dbReference type="KEGG" id="eum:ECUMN_0569"/>
<dbReference type="PATRIC" id="fig|585056.7.peg.778"/>
<dbReference type="HOGENOM" id="CLU_034045_2_1_6"/>
<dbReference type="UniPathway" id="UPA00193"/>
<dbReference type="Proteomes" id="UP000007097">
    <property type="component" value="Chromosome"/>
</dbReference>
<dbReference type="GO" id="GO:0005829">
    <property type="term" value="C:cytosol"/>
    <property type="evidence" value="ECO:0007669"/>
    <property type="project" value="TreeGrafter"/>
</dbReference>
<dbReference type="GO" id="GO:0004477">
    <property type="term" value="F:methenyltetrahydrofolate cyclohydrolase activity"/>
    <property type="evidence" value="ECO:0007669"/>
    <property type="project" value="UniProtKB-UniRule"/>
</dbReference>
<dbReference type="GO" id="GO:0004488">
    <property type="term" value="F:methylenetetrahydrofolate dehydrogenase (NADP+) activity"/>
    <property type="evidence" value="ECO:0007669"/>
    <property type="project" value="UniProtKB-UniRule"/>
</dbReference>
<dbReference type="GO" id="GO:0000105">
    <property type="term" value="P:L-histidine biosynthetic process"/>
    <property type="evidence" value="ECO:0007669"/>
    <property type="project" value="UniProtKB-KW"/>
</dbReference>
<dbReference type="GO" id="GO:0009086">
    <property type="term" value="P:methionine biosynthetic process"/>
    <property type="evidence" value="ECO:0007669"/>
    <property type="project" value="UniProtKB-KW"/>
</dbReference>
<dbReference type="GO" id="GO:0006164">
    <property type="term" value="P:purine nucleotide biosynthetic process"/>
    <property type="evidence" value="ECO:0007669"/>
    <property type="project" value="UniProtKB-KW"/>
</dbReference>
<dbReference type="GO" id="GO:0035999">
    <property type="term" value="P:tetrahydrofolate interconversion"/>
    <property type="evidence" value="ECO:0007669"/>
    <property type="project" value="UniProtKB-UniRule"/>
</dbReference>
<dbReference type="CDD" id="cd01080">
    <property type="entry name" value="NAD_bind_m-THF_DH_Cyclohyd"/>
    <property type="match status" value="1"/>
</dbReference>
<dbReference type="FunFam" id="3.40.50.10860:FF:000001">
    <property type="entry name" value="Bifunctional protein FolD"/>
    <property type="match status" value="1"/>
</dbReference>
<dbReference type="FunFam" id="3.40.50.720:FF:000006">
    <property type="entry name" value="Bifunctional protein FolD"/>
    <property type="match status" value="1"/>
</dbReference>
<dbReference type="Gene3D" id="3.40.50.10860">
    <property type="entry name" value="Leucine Dehydrogenase, chain A, domain 1"/>
    <property type="match status" value="1"/>
</dbReference>
<dbReference type="Gene3D" id="3.40.50.720">
    <property type="entry name" value="NAD(P)-binding Rossmann-like Domain"/>
    <property type="match status" value="1"/>
</dbReference>
<dbReference type="HAMAP" id="MF_01576">
    <property type="entry name" value="THF_DHG_CYH"/>
    <property type="match status" value="1"/>
</dbReference>
<dbReference type="InterPro" id="IPR046346">
    <property type="entry name" value="Aminoacid_DH-like_N_sf"/>
</dbReference>
<dbReference type="InterPro" id="IPR036291">
    <property type="entry name" value="NAD(P)-bd_dom_sf"/>
</dbReference>
<dbReference type="InterPro" id="IPR000672">
    <property type="entry name" value="THF_DH/CycHdrlase"/>
</dbReference>
<dbReference type="InterPro" id="IPR020630">
    <property type="entry name" value="THF_DH/CycHdrlase_cat_dom"/>
</dbReference>
<dbReference type="InterPro" id="IPR020867">
    <property type="entry name" value="THF_DH/CycHdrlase_CS"/>
</dbReference>
<dbReference type="InterPro" id="IPR020631">
    <property type="entry name" value="THF_DH/CycHdrlase_NAD-bd_dom"/>
</dbReference>
<dbReference type="NCBIfam" id="NF008058">
    <property type="entry name" value="PRK10792.1"/>
    <property type="match status" value="1"/>
</dbReference>
<dbReference type="NCBIfam" id="NF010783">
    <property type="entry name" value="PRK14186.1"/>
    <property type="match status" value="1"/>
</dbReference>
<dbReference type="PANTHER" id="PTHR48099:SF5">
    <property type="entry name" value="C-1-TETRAHYDROFOLATE SYNTHASE, CYTOPLASMIC"/>
    <property type="match status" value="1"/>
</dbReference>
<dbReference type="PANTHER" id="PTHR48099">
    <property type="entry name" value="C-1-TETRAHYDROFOLATE SYNTHASE, CYTOPLASMIC-RELATED"/>
    <property type="match status" value="1"/>
</dbReference>
<dbReference type="Pfam" id="PF00763">
    <property type="entry name" value="THF_DHG_CYH"/>
    <property type="match status" value="1"/>
</dbReference>
<dbReference type="Pfam" id="PF02882">
    <property type="entry name" value="THF_DHG_CYH_C"/>
    <property type="match status" value="1"/>
</dbReference>
<dbReference type="PRINTS" id="PR00085">
    <property type="entry name" value="THFDHDRGNASE"/>
</dbReference>
<dbReference type="SUPFAM" id="SSF53223">
    <property type="entry name" value="Aminoacid dehydrogenase-like, N-terminal domain"/>
    <property type="match status" value="1"/>
</dbReference>
<dbReference type="SUPFAM" id="SSF51735">
    <property type="entry name" value="NAD(P)-binding Rossmann-fold domains"/>
    <property type="match status" value="1"/>
</dbReference>
<dbReference type="PROSITE" id="PS00766">
    <property type="entry name" value="THF_DHG_CYH_1"/>
    <property type="match status" value="1"/>
</dbReference>
<dbReference type="PROSITE" id="PS00767">
    <property type="entry name" value="THF_DHG_CYH_2"/>
    <property type="match status" value="1"/>
</dbReference>
<proteinExistence type="inferred from homology"/>
<protein>
    <recommendedName>
        <fullName evidence="1">Bifunctional protein FolD</fullName>
    </recommendedName>
    <domain>
        <recommendedName>
            <fullName evidence="1">Methylenetetrahydrofolate dehydrogenase</fullName>
            <ecNumber evidence="1">1.5.1.5</ecNumber>
        </recommendedName>
    </domain>
    <domain>
        <recommendedName>
            <fullName evidence="1">Methenyltetrahydrofolate cyclohydrolase</fullName>
            <ecNumber evidence="1">3.5.4.9</ecNumber>
        </recommendedName>
    </domain>
</protein>
<keyword id="KW-0028">Amino-acid biosynthesis</keyword>
<keyword id="KW-0368">Histidine biosynthesis</keyword>
<keyword id="KW-0378">Hydrolase</keyword>
<keyword id="KW-0486">Methionine biosynthesis</keyword>
<keyword id="KW-0511">Multifunctional enzyme</keyword>
<keyword id="KW-0521">NADP</keyword>
<keyword id="KW-0554">One-carbon metabolism</keyword>
<keyword id="KW-0560">Oxidoreductase</keyword>
<keyword id="KW-0658">Purine biosynthesis</keyword>
<comment type="function">
    <text evidence="1">Catalyzes the oxidation of 5,10-methylenetetrahydrofolate to 5,10-methenyltetrahydrofolate and then the hydrolysis of 5,10-methenyltetrahydrofolate to 10-formyltetrahydrofolate.</text>
</comment>
<comment type="catalytic activity">
    <reaction evidence="1">
        <text>(6R)-5,10-methylene-5,6,7,8-tetrahydrofolate + NADP(+) = (6R)-5,10-methenyltetrahydrofolate + NADPH</text>
        <dbReference type="Rhea" id="RHEA:22812"/>
        <dbReference type="ChEBI" id="CHEBI:15636"/>
        <dbReference type="ChEBI" id="CHEBI:57455"/>
        <dbReference type="ChEBI" id="CHEBI:57783"/>
        <dbReference type="ChEBI" id="CHEBI:58349"/>
        <dbReference type="EC" id="1.5.1.5"/>
    </reaction>
</comment>
<comment type="catalytic activity">
    <reaction evidence="1">
        <text>(6R)-5,10-methenyltetrahydrofolate + H2O = (6R)-10-formyltetrahydrofolate + H(+)</text>
        <dbReference type="Rhea" id="RHEA:23700"/>
        <dbReference type="ChEBI" id="CHEBI:15377"/>
        <dbReference type="ChEBI" id="CHEBI:15378"/>
        <dbReference type="ChEBI" id="CHEBI:57455"/>
        <dbReference type="ChEBI" id="CHEBI:195366"/>
        <dbReference type="EC" id="3.5.4.9"/>
    </reaction>
</comment>
<comment type="pathway">
    <text evidence="1">One-carbon metabolism; tetrahydrofolate interconversion.</text>
</comment>
<comment type="subunit">
    <text evidence="1">Homodimer.</text>
</comment>
<comment type="similarity">
    <text evidence="1">Belongs to the tetrahydrofolate dehydrogenase/cyclohydrolase family.</text>
</comment>
<gene>
    <name evidence="1" type="primary">folD</name>
    <name type="ordered locus">ECUMN_0569</name>
</gene>
<feature type="chain" id="PRO_1000196775" description="Bifunctional protein FolD">
    <location>
        <begin position="1"/>
        <end position="288"/>
    </location>
</feature>
<feature type="binding site" evidence="1">
    <location>
        <begin position="166"/>
        <end position="168"/>
    </location>
    <ligand>
        <name>NADP(+)</name>
        <dbReference type="ChEBI" id="CHEBI:58349"/>
    </ligand>
</feature>
<feature type="binding site" evidence="1">
    <location>
        <position position="232"/>
    </location>
    <ligand>
        <name>NADP(+)</name>
        <dbReference type="ChEBI" id="CHEBI:58349"/>
    </ligand>
</feature>
<accession>B7N983</accession>